<organism>
    <name type="scientific">Mus musculus</name>
    <name type="common">Mouse</name>
    <dbReference type="NCBI Taxonomy" id="10090"/>
    <lineage>
        <taxon>Eukaryota</taxon>
        <taxon>Metazoa</taxon>
        <taxon>Chordata</taxon>
        <taxon>Craniata</taxon>
        <taxon>Vertebrata</taxon>
        <taxon>Euteleostomi</taxon>
        <taxon>Mammalia</taxon>
        <taxon>Eutheria</taxon>
        <taxon>Euarchontoglires</taxon>
        <taxon>Glires</taxon>
        <taxon>Rodentia</taxon>
        <taxon>Myomorpha</taxon>
        <taxon>Muroidea</taxon>
        <taxon>Muridae</taxon>
        <taxon>Murinae</taxon>
        <taxon>Mus</taxon>
        <taxon>Mus</taxon>
    </lineage>
</organism>
<comment type="function">
    <text evidence="1">May function as a substrate receptor for CUL4-DDB1 E3 ubiquitin-protein ligase complex.</text>
</comment>
<comment type="pathway">
    <text>Protein modification; protein ubiquitination.</text>
</comment>
<comment type="subunit">
    <text evidence="1">Interacts with DDB1.</text>
</comment>
<comment type="alternative products">
    <event type="alternative splicing"/>
    <isoform>
        <id>A2AKB9-1</id>
        <name>1</name>
        <sequence type="displayed"/>
    </isoform>
    <isoform>
        <id>A2AKB9-2</id>
        <name>2</name>
        <sequence type="described" ref="VSP_028516"/>
    </isoform>
    <isoform>
        <id>A2AKB9-3</id>
        <name>3</name>
        <sequence type="described" ref="VSP_028514"/>
    </isoform>
    <isoform>
        <id>A2AKB9-4</id>
        <name>4</name>
        <sequence type="described" ref="VSP_028515"/>
    </isoform>
</comment>
<comment type="similarity">
    <text evidence="5">Belongs to the WD repeat DCAF10 family.</text>
</comment>
<comment type="sequence caution" evidence="5">
    <conflict type="erroneous initiation">
        <sequence resource="EMBL-CDS" id="AAH27317"/>
    </conflict>
</comment>
<comment type="sequence caution" evidence="5">
    <conflict type="erroneous initiation">
        <sequence resource="EMBL-CDS" id="AAH85101"/>
    </conflict>
</comment>
<comment type="sequence caution" evidence="5">
    <conflict type="erroneous initiation">
        <sequence resource="EMBL-CDS" id="BAC38912"/>
    </conflict>
</comment>
<comment type="sequence caution" evidence="5">
    <conflict type="erroneous gene model prediction">
        <sequence resource="EMBL-CDS" id="CAM20443"/>
    </conflict>
</comment>
<gene>
    <name type="primary">Dcaf10</name>
    <name type="synonym">Wdr32</name>
</gene>
<protein>
    <recommendedName>
        <fullName>DDB1- and CUL4-associated factor 10</fullName>
    </recommendedName>
    <alternativeName>
        <fullName>WD repeat-containing protein 32</fullName>
    </alternativeName>
</protein>
<feature type="chain" id="PRO_0000306834" description="DDB1- and CUL4-associated factor 10">
    <location>
        <begin position="1"/>
        <end position="566"/>
    </location>
</feature>
<feature type="repeat" description="WD 1">
    <location>
        <begin position="173"/>
        <end position="212"/>
    </location>
</feature>
<feature type="repeat" description="WD 2">
    <location>
        <begin position="216"/>
        <end position="254"/>
    </location>
</feature>
<feature type="repeat" description="WD 3">
    <location>
        <begin position="258"/>
        <end position="297"/>
    </location>
</feature>
<feature type="repeat" description="WD 4">
    <location>
        <begin position="303"/>
        <end position="342"/>
    </location>
</feature>
<feature type="repeat" description="WD 5">
    <location>
        <begin position="415"/>
        <end position="455"/>
    </location>
</feature>
<feature type="repeat" description="WD 6">
    <location>
        <begin position="477"/>
        <end position="515"/>
    </location>
</feature>
<feature type="repeat" description="WD 7">
    <location>
        <begin position="533"/>
        <end position="566"/>
    </location>
</feature>
<feature type="region of interest" description="Disordered" evidence="3">
    <location>
        <begin position="1"/>
        <end position="72"/>
    </location>
</feature>
<feature type="region of interest" description="Disordered" evidence="3">
    <location>
        <begin position="87"/>
        <end position="123"/>
    </location>
</feature>
<feature type="region of interest" description="Disordered" evidence="3">
    <location>
        <begin position="354"/>
        <end position="413"/>
    </location>
</feature>
<feature type="compositionally biased region" description="Low complexity" evidence="3">
    <location>
        <begin position="87"/>
        <end position="100"/>
    </location>
</feature>
<feature type="compositionally biased region" description="Low complexity" evidence="3">
    <location>
        <begin position="354"/>
        <end position="374"/>
    </location>
</feature>
<feature type="compositionally biased region" description="Basic and acidic residues" evidence="3">
    <location>
        <begin position="377"/>
        <end position="388"/>
    </location>
</feature>
<feature type="modified residue" description="Phosphoserine" evidence="6">
    <location>
        <position position="50"/>
    </location>
</feature>
<feature type="modified residue" description="Phosphoserine" evidence="6">
    <location>
        <position position="57"/>
    </location>
</feature>
<feature type="modified residue" description="Phosphoserine" evidence="2">
    <location>
        <position position="67"/>
    </location>
</feature>
<feature type="modified residue" description="Phosphoserine" evidence="6">
    <location>
        <position position="96"/>
    </location>
</feature>
<feature type="modified residue" description="Phosphoserine" evidence="2">
    <location>
        <position position="99"/>
    </location>
</feature>
<feature type="modified residue" description="Phosphoserine" evidence="6">
    <location>
        <position position="100"/>
    </location>
</feature>
<feature type="modified residue" description="Omega-N-methylarginine" evidence="7">
    <location>
        <position position="141"/>
    </location>
</feature>
<feature type="modified residue" description="Phosphoserine" evidence="2">
    <location>
        <position position="356"/>
    </location>
</feature>
<feature type="splice variant" id="VSP_028514" description="In isoform 3." evidence="4">
    <location>
        <begin position="1"/>
        <end position="308"/>
    </location>
</feature>
<feature type="splice variant" id="VSP_028515" description="In isoform 4." evidence="4">
    <location>
        <begin position="226"/>
        <end position="566"/>
    </location>
</feature>
<feature type="splice variant" id="VSP_028516" description="In isoform 2." evidence="5">
    <location>
        <begin position="359"/>
        <end position="395"/>
    </location>
</feature>
<feature type="sequence conflict" description="In Ref. 1; BAE38101." evidence="5" ref="1">
    <original>F</original>
    <variation>L</variation>
    <location>
        <position position="202"/>
    </location>
</feature>
<feature type="sequence conflict" description="In Ref. 3; AAH27317." evidence="5" ref="3">
    <original>C</original>
    <variation>S</variation>
    <location>
        <position position="235"/>
    </location>
</feature>
<feature type="sequence conflict" description="In Ref. 1; BAC38912." evidence="5" ref="1">
    <original>S</original>
    <variation>P</variation>
    <location>
        <position position="323"/>
    </location>
</feature>
<name>DCA10_MOUSE</name>
<evidence type="ECO:0000250" key="1"/>
<evidence type="ECO:0000250" key="2">
    <source>
        <dbReference type="UniProtKB" id="Q5QP82"/>
    </source>
</evidence>
<evidence type="ECO:0000256" key="3">
    <source>
        <dbReference type="SAM" id="MobiDB-lite"/>
    </source>
</evidence>
<evidence type="ECO:0000303" key="4">
    <source>
    </source>
</evidence>
<evidence type="ECO:0000305" key="5"/>
<evidence type="ECO:0007744" key="6">
    <source>
    </source>
</evidence>
<evidence type="ECO:0007744" key="7">
    <source>
    </source>
</evidence>
<sequence length="566" mass="61558">MFPFGPHSPGGDETAGAEEPPPLGGPAAASRPPSPAPRPASPQRGADAASPPPVAGSPRLPGGPAVSPAERAGEFAAPGALELSAATASASQAKLSPSSSPRRRSRPDWRAGGRSRQGLGAGLGGPGARLFGWLRERSLGRGLFVDPARDNFRTMTNLYGSIHPADSVYLSTRTHGAVFNLEYSPDGSVLTVACEQTEVLLFDPISSKHIKTLSEAHEDCVNNIRFLDNRLFATCSDDTTIALWDLRKLNTKVCTLHGHTSWVKNIEYDTNTRLLVTSGFDGNVIIWDTNRCTEDGCPHKKFFHTRFLMRMRLTPDCSKMLISTSSGYLLILHELDLTKSLEVGSYPILRARRTTSSSDLTTTSSSSGSRVSGSPCHHNDSNSTEKHMSRASQREGVSPRNSLEVLTPEVPGERDRGNCITSLQLHPKGWATLLRCSSNTDDQEWTCVYEFQEGAPVRPVSPRCSLRLTHYIEEANVGRGYIKELCFSPDGRMISSPHGYGIRLLGFDKQCSELVDCLPKEASPLRVIRSLYSHNDVVLTTKFSPTHCQIASGCLSGRVSLYQPKF</sequence>
<reference key="1">
    <citation type="journal article" date="2005" name="Science">
        <title>The transcriptional landscape of the mammalian genome.</title>
        <authorList>
            <person name="Carninci P."/>
            <person name="Kasukawa T."/>
            <person name="Katayama S."/>
            <person name="Gough J."/>
            <person name="Frith M.C."/>
            <person name="Maeda N."/>
            <person name="Oyama R."/>
            <person name="Ravasi T."/>
            <person name="Lenhard B."/>
            <person name="Wells C."/>
            <person name="Kodzius R."/>
            <person name="Shimokawa K."/>
            <person name="Bajic V.B."/>
            <person name="Brenner S.E."/>
            <person name="Batalov S."/>
            <person name="Forrest A.R."/>
            <person name="Zavolan M."/>
            <person name="Davis M.J."/>
            <person name="Wilming L.G."/>
            <person name="Aidinis V."/>
            <person name="Allen J.E."/>
            <person name="Ambesi-Impiombato A."/>
            <person name="Apweiler R."/>
            <person name="Aturaliya R.N."/>
            <person name="Bailey T.L."/>
            <person name="Bansal M."/>
            <person name="Baxter L."/>
            <person name="Beisel K.W."/>
            <person name="Bersano T."/>
            <person name="Bono H."/>
            <person name="Chalk A.M."/>
            <person name="Chiu K.P."/>
            <person name="Choudhary V."/>
            <person name="Christoffels A."/>
            <person name="Clutterbuck D.R."/>
            <person name="Crowe M.L."/>
            <person name="Dalla E."/>
            <person name="Dalrymple B.P."/>
            <person name="de Bono B."/>
            <person name="Della Gatta G."/>
            <person name="di Bernardo D."/>
            <person name="Down T."/>
            <person name="Engstrom P."/>
            <person name="Fagiolini M."/>
            <person name="Faulkner G."/>
            <person name="Fletcher C.F."/>
            <person name="Fukushima T."/>
            <person name="Furuno M."/>
            <person name="Futaki S."/>
            <person name="Gariboldi M."/>
            <person name="Georgii-Hemming P."/>
            <person name="Gingeras T.R."/>
            <person name="Gojobori T."/>
            <person name="Green R.E."/>
            <person name="Gustincich S."/>
            <person name="Harbers M."/>
            <person name="Hayashi Y."/>
            <person name="Hensch T.K."/>
            <person name="Hirokawa N."/>
            <person name="Hill D."/>
            <person name="Huminiecki L."/>
            <person name="Iacono M."/>
            <person name="Ikeo K."/>
            <person name="Iwama A."/>
            <person name="Ishikawa T."/>
            <person name="Jakt M."/>
            <person name="Kanapin A."/>
            <person name="Katoh M."/>
            <person name="Kawasawa Y."/>
            <person name="Kelso J."/>
            <person name="Kitamura H."/>
            <person name="Kitano H."/>
            <person name="Kollias G."/>
            <person name="Krishnan S.P."/>
            <person name="Kruger A."/>
            <person name="Kummerfeld S.K."/>
            <person name="Kurochkin I.V."/>
            <person name="Lareau L.F."/>
            <person name="Lazarevic D."/>
            <person name="Lipovich L."/>
            <person name="Liu J."/>
            <person name="Liuni S."/>
            <person name="McWilliam S."/>
            <person name="Madan Babu M."/>
            <person name="Madera M."/>
            <person name="Marchionni L."/>
            <person name="Matsuda H."/>
            <person name="Matsuzawa S."/>
            <person name="Miki H."/>
            <person name="Mignone F."/>
            <person name="Miyake S."/>
            <person name="Morris K."/>
            <person name="Mottagui-Tabar S."/>
            <person name="Mulder N."/>
            <person name="Nakano N."/>
            <person name="Nakauchi H."/>
            <person name="Ng P."/>
            <person name="Nilsson R."/>
            <person name="Nishiguchi S."/>
            <person name="Nishikawa S."/>
            <person name="Nori F."/>
            <person name="Ohara O."/>
            <person name="Okazaki Y."/>
            <person name="Orlando V."/>
            <person name="Pang K.C."/>
            <person name="Pavan W.J."/>
            <person name="Pavesi G."/>
            <person name="Pesole G."/>
            <person name="Petrovsky N."/>
            <person name="Piazza S."/>
            <person name="Reed J."/>
            <person name="Reid J.F."/>
            <person name="Ring B.Z."/>
            <person name="Ringwald M."/>
            <person name="Rost B."/>
            <person name="Ruan Y."/>
            <person name="Salzberg S.L."/>
            <person name="Sandelin A."/>
            <person name="Schneider C."/>
            <person name="Schoenbach C."/>
            <person name="Sekiguchi K."/>
            <person name="Semple C.A."/>
            <person name="Seno S."/>
            <person name="Sessa L."/>
            <person name="Sheng Y."/>
            <person name="Shibata Y."/>
            <person name="Shimada H."/>
            <person name="Shimada K."/>
            <person name="Silva D."/>
            <person name="Sinclair B."/>
            <person name="Sperling S."/>
            <person name="Stupka E."/>
            <person name="Sugiura K."/>
            <person name="Sultana R."/>
            <person name="Takenaka Y."/>
            <person name="Taki K."/>
            <person name="Tammoja K."/>
            <person name="Tan S.L."/>
            <person name="Tang S."/>
            <person name="Taylor M.S."/>
            <person name="Tegner J."/>
            <person name="Teichmann S.A."/>
            <person name="Ueda H.R."/>
            <person name="van Nimwegen E."/>
            <person name="Verardo R."/>
            <person name="Wei C.L."/>
            <person name="Yagi K."/>
            <person name="Yamanishi H."/>
            <person name="Zabarovsky E."/>
            <person name="Zhu S."/>
            <person name="Zimmer A."/>
            <person name="Hide W."/>
            <person name="Bult C."/>
            <person name="Grimmond S.M."/>
            <person name="Teasdale R.D."/>
            <person name="Liu E.T."/>
            <person name="Brusic V."/>
            <person name="Quackenbush J."/>
            <person name="Wahlestedt C."/>
            <person name="Mattick J.S."/>
            <person name="Hume D.A."/>
            <person name="Kai C."/>
            <person name="Sasaki D."/>
            <person name="Tomaru Y."/>
            <person name="Fukuda S."/>
            <person name="Kanamori-Katayama M."/>
            <person name="Suzuki M."/>
            <person name="Aoki J."/>
            <person name="Arakawa T."/>
            <person name="Iida J."/>
            <person name="Imamura K."/>
            <person name="Itoh M."/>
            <person name="Kato T."/>
            <person name="Kawaji H."/>
            <person name="Kawagashira N."/>
            <person name="Kawashima T."/>
            <person name="Kojima M."/>
            <person name="Kondo S."/>
            <person name="Konno H."/>
            <person name="Nakano K."/>
            <person name="Ninomiya N."/>
            <person name="Nishio T."/>
            <person name="Okada M."/>
            <person name="Plessy C."/>
            <person name="Shibata K."/>
            <person name="Shiraki T."/>
            <person name="Suzuki S."/>
            <person name="Tagami M."/>
            <person name="Waki K."/>
            <person name="Watahiki A."/>
            <person name="Okamura-Oho Y."/>
            <person name="Suzuki H."/>
            <person name="Kawai J."/>
            <person name="Hayashizaki Y."/>
        </authorList>
    </citation>
    <scope>NUCLEOTIDE SEQUENCE [LARGE SCALE MRNA] (ISOFORMS 3 AND 4)</scope>
    <scope>NUCLEOTIDE SEQUENCE [LARGE SCALE MRNA] OF 112-566 (ISOFORM 1)</scope>
    <source>
        <strain>C57BL/6J</strain>
        <tissue>Embryo</tissue>
        <tissue>Head</tissue>
        <tissue>Spleen</tissue>
    </source>
</reference>
<reference key="2">
    <citation type="journal article" date="2009" name="PLoS Biol.">
        <title>Lineage-specific biology revealed by a finished genome assembly of the mouse.</title>
        <authorList>
            <person name="Church D.M."/>
            <person name="Goodstadt L."/>
            <person name="Hillier L.W."/>
            <person name="Zody M.C."/>
            <person name="Goldstein S."/>
            <person name="She X."/>
            <person name="Bult C.J."/>
            <person name="Agarwala R."/>
            <person name="Cherry J.L."/>
            <person name="DiCuccio M."/>
            <person name="Hlavina W."/>
            <person name="Kapustin Y."/>
            <person name="Meric P."/>
            <person name="Maglott D."/>
            <person name="Birtle Z."/>
            <person name="Marques A.C."/>
            <person name="Graves T."/>
            <person name="Zhou S."/>
            <person name="Teague B."/>
            <person name="Potamousis K."/>
            <person name="Churas C."/>
            <person name="Place M."/>
            <person name="Herschleb J."/>
            <person name="Runnheim R."/>
            <person name="Forrest D."/>
            <person name="Amos-Landgraf J."/>
            <person name="Schwartz D.C."/>
            <person name="Cheng Z."/>
            <person name="Lindblad-Toh K."/>
            <person name="Eichler E.E."/>
            <person name="Ponting C.P."/>
        </authorList>
    </citation>
    <scope>NUCLEOTIDE SEQUENCE [LARGE SCALE GENOMIC DNA]</scope>
    <scope>ALTERNATIVE SPLICING</scope>
    <source>
        <strain>C57BL/6J</strain>
    </source>
</reference>
<reference key="3">
    <citation type="journal article" date="2004" name="Genome Res.">
        <title>The status, quality, and expansion of the NIH full-length cDNA project: the Mammalian Gene Collection (MGC).</title>
        <authorList>
            <consortium name="The MGC Project Team"/>
        </authorList>
    </citation>
    <scope>NUCLEOTIDE SEQUENCE [LARGE SCALE MRNA]</scope>
    <source>
        <strain>FVB/N</strain>
        <tissue>Mammary tumor</tissue>
        <tissue>Olfactory epithelium</tissue>
    </source>
</reference>
<reference key="4">
    <citation type="journal article" date="2010" name="Cell">
        <title>A tissue-specific atlas of mouse protein phosphorylation and expression.</title>
        <authorList>
            <person name="Huttlin E.L."/>
            <person name="Jedrychowski M.P."/>
            <person name="Elias J.E."/>
            <person name="Goswami T."/>
            <person name="Rad R."/>
            <person name="Beausoleil S.A."/>
            <person name="Villen J."/>
            <person name="Haas W."/>
            <person name="Sowa M.E."/>
            <person name="Gygi S.P."/>
        </authorList>
    </citation>
    <scope>PHOSPHORYLATION [LARGE SCALE ANALYSIS] AT SER-50; SER-57; SER-96 AND SER-100</scope>
    <scope>IDENTIFICATION BY MASS SPECTROMETRY [LARGE SCALE ANALYSIS]</scope>
    <source>
        <tissue>Lung</tissue>
        <tissue>Spleen</tissue>
        <tissue>Testis</tissue>
    </source>
</reference>
<reference key="5">
    <citation type="journal article" date="2014" name="Mol. Cell. Proteomics">
        <title>Immunoaffinity enrichment and mass spectrometry analysis of protein methylation.</title>
        <authorList>
            <person name="Guo A."/>
            <person name="Gu H."/>
            <person name="Zhou J."/>
            <person name="Mulhern D."/>
            <person name="Wang Y."/>
            <person name="Lee K.A."/>
            <person name="Yang V."/>
            <person name="Aguiar M."/>
            <person name="Kornhauser J."/>
            <person name="Jia X."/>
            <person name="Ren J."/>
            <person name="Beausoleil S.A."/>
            <person name="Silva J.C."/>
            <person name="Vemulapalli V."/>
            <person name="Bedford M.T."/>
            <person name="Comb M.J."/>
        </authorList>
    </citation>
    <scope>METHYLATION [LARGE SCALE ANALYSIS] AT ARG-141</scope>
    <scope>IDENTIFICATION BY MASS SPECTROMETRY [LARGE SCALE ANALYSIS]</scope>
    <source>
        <tissue>Embryo</tissue>
    </source>
</reference>
<keyword id="KW-0025">Alternative splicing</keyword>
<keyword id="KW-0488">Methylation</keyword>
<keyword id="KW-0597">Phosphoprotein</keyword>
<keyword id="KW-1185">Reference proteome</keyword>
<keyword id="KW-0677">Repeat</keyword>
<keyword id="KW-0833">Ubl conjugation pathway</keyword>
<keyword id="KW-0853">WD repeat</keyword>
<dbReference type="EMBL" id="AK045241">
    <property type="protein sequence ID" value="BAC32276.1"/>
    <property type="molecule type" value="mRNA"/>
</dbReference>
<dbReference type="EMBL" id="AK076417">
    <property type="protein sequence ID" value="BAC36330.1"/>
    <property type="molecule type" value="mRNA"/>
</dbReference>
<dbReference type="EMBL" id="AK083428">
    <property type="protein sequence ID" value="BAC38912.1"/>
    <property type="status" value="ALT_INIT"/>
    <property type="molecule type" value="mRNA"/>
</dbReference>
<dbReference type="EMBL" id="AK165246">
    <property type="protein sequence ID" value="BAE38101.1"/>
    <property type="molecule type" value="mRNA"/>
</dbReference>
<dbReference type="EMBL" id="AL772376">
    <property type="protein sequence ID" value="CAM20447.1"/>
    <property type="molecule type" value="Genomic_DNA"/>
</dbReference>
<dbReference type="EMBL" id="AL772285">
    <property type="protein sequence ID" value="CAM20447.1"/>
    <property type="status" value="JOINED"/>
    <property type="molecule type" value="Genomic_DNA"/>
</dbReference>
<dbReference type="EMBL" id="AL772285">
    <property type="protein sequence ID" value="CAM26867.1"/>
    <property type="molecule type" value="Genomic_DNA"/>
</dbReference>
<dbReference type="EMBL" id="AL772376">
    <property type="protein sequence ID" value="CAM26867.1"/>
    <property type="status" value="JOINED"/>
    <property type="molecule type" value="Genomic_DNA"/>
</dbReference>
<dbReference type="EMBL" id="AL772376">
    <property type="protein sequence ID" value="CAM20443.1"/>
    <property type="status" value="ALT_SEQ"/>
    <property type="molecule type" value="Genomic_DNA"/>
</dbReference>
<dbReference type="EMBL" id="BC027317">
    <property type="protein sequence ID" value="AAH27317.1"/>
    <property type="status" value="ALT_INIT"/>
    <property type="molecule type" value="mRNA"/>
</dbReference>
<dbReference type="EMBL" id="BC085101">
    <property type="protein sequence ID" value="AAH85101.1"/>
    <property type="status" value="ALT_INIT"/>
    <property type="molecule type" value="mRNA"/>
</dbReference>
<dbReference type="CCDS" id="CCDS38754.1">
    <molecule id="A2AKB9-1"/>
</dbReference>
<dbReference type="RefSeq" id="NP_694807.2">
    <molecule id="A2AKB9-1"/>
    <property type="nucleotide sequence ID" value="NM_153167.2"/>
</dbReference>
<dbReference type="SMR" id="A2AKB9"/>
<dbReference type="BioGRID" id="232403">
    <property type="interactions" value="1"/>
</dbReference>
<dbReference type="FunCoup" id="A2AKB9">
    <property type="interactions" value="299"/>
</dbReference>
<dbReference type="STRING" id="10090.ENSMUSP00000117082"/>
<dbReference type="GlyGen" id="A2AKB9">
    <property type="glycosylation" value="4 sites, 1 O-linked glycan (4 sites)"/>
</dbReference>
<dbReference type="iPTMnet" id="A2AKB9"/>
<dbReference type="PhosphoSitePlus" id="A2AKB9"/>
<dbReference type="PaxDb" id="10090-ENSMUSP00000117082"/>
<dbReference type="PeptideAtlas" id="A2AKB9"/>
<dbReference type="ProteomicsDB" id="277954">
    <molecule id="A2AKB9-1"/>
</dbReference>
<dbReference type="ProteomicsDB" id="277955">
    <molecule id="A2AKB9-2"/>
</dbReference>
<dbReference type="ProteomicsDB" id="277956">
    <molecule id="A2AKB9-3"/>
</dbReference>
<dbReference type="ProteomicsDB" id="277957">
    <molecule id="A2AKB9-4"/>
</dbReference>
<dbReference type="Pumba" id="A2AKB9"/>
<dbReference type="Antibodypedia" id="12056">
    <property type="antibodies" value="96 antibodies from 19 providers"/>
</dbReference>
<dbReference type="Ensembl" id="ENSMUST00000155551.8">
    <molecule id="A2AKB9-1"/>
    <property type="protein sequence ID" value="ENSMUSP00000117082.2"/>
    <property type="gene ID" value="ENSMUSG00000035572.17"/>
</dbReference>
<dbReference type="GeneID" id="242418"/>
<dbReference type="KEGG" id="mmu:242418"/>
<dbReference type="UCSC" id="uc008ssm.1">
    <molecule id="A2AKB9-4"/>
    <property type="organism name" value="mouse"/>
</dbReference>
<dbReference type="UCSC" id="uc008ssn.1">
    <molecule id="A2AKB9-1"/>
    <property type="organism name" value="mouse"/>
</dbReference>
<dbReference type="AGR" id="MGI:2140179"/>
<dbReference type="CTD" id="79269"/>
<dbReference type="MGI" id="MGI:2140179">
    <property type="gene designation" value="Dcaf10"/>
</dbReference>
<dbReference type="VEuPathDB" id="HostDB:ENSMUSG00000035572"/>
<dbReference type="eggNOG" id="KOG0266">
    <property type="taxonomic scope" value="Eukaryota"/>
</dbReference>
<dbReference type="eggNOG" id="KOG4155">
    <property type="taxonomic scope" value="Eukaryota"/>
</dbReference>
<dbReference type="GeneTree" id="ENSGT00390000012666"/>
<dbReference type="HOGENOM" id="CLU_028919_2_0_1"/>
<dbReference type="InParanoid" id="A2AKB9"/>
<dbReference type="OMA" id="STAHEDC"/>
<dbReference type="OrthoDB" id="20669at2759"/>
<dbReference type="PhylomeDB" id="A2AKB9"/>
<dbReference type="TreeFam" id="TF323434"/>
<dbReference type="Reactome" id="R-MMU-8951664">
    <property type="pathway name" value="Neddylation"/>
</dbReference>
<dbReference type="UniPathway" id="UPA00143"/>
<dbReference type="BioGRID-ORCS" id="242418">
    <property type="hits" value="1 hit in 77 CRISPR screens"/>
</dbReference>
<dbReference type="ChiTaRS" id="Dcaf10">
    <property type="organism name" value="mouse"/>
</dbReference>
<dbReference type="PRO" id="PR:A2AKB9"/>
<dbReference type="Proteomes" id="UP000000589">
    <property type="component" value="Chromosome 4"/>
</dbReference>
<dbReference type="RNAct" id="A2AKB9">
    <property type="molecule type" value="protein"/>
</dbReference>
<dbReference type="Bgee" id="ENSMUSG00000035572">
    <property type="expression patterns" value="Expressed in humerus cartilage element and 223 other cell types or tissues"/>
</dbReference>
<dbReference type="ExpressionAtlas" id="A2AKB9">
    <property type="expression patterns" value="baseline and differential"/>
</dbReference>
<dbReference type="GO" id="GO:0080008">
    <property type="term" value="C:Cul4-RING E3 ubiquitin ligase complex"/>
    <property type="evidence" value="ECO:0000250"/>
    <property type="project" value="UniProtKB"/>
</dbReference>
<dbReference type="GO" id="GO:0016567">
    <property type="term" value="P:protein ubiquitination"/>
    <property type="evidence" value="ECO:0007669"/>
    <property type="project" value="UniProtKB-UniPathway"/>
</dbReference>
<dbReference type="FunFam" id="2.130.10.10:FF:000116">
    <property type="entry name" value="DDB1- and CUL4-associated factor 10"/>
    <property type="match status" value="1"/>
</dbReference>
<dbReference type="FunFam" id="2.130.10.10:FF:000321">
    <property type="entry name" value="DDB1- and CUL4-associated factor 10"/>
    <property type="match status" value="1"/>
</dbReference>
<dbReference type="Gene3D" id="2.130.10.10">
    <property type="entry name" value="YVTN repeat-like/Quinoprotein amine dehydrogenase"/>
    <property type="match status" value="2"/>
</dbReference>
<dbReference type="InterPro" id="IPR039085">
    <property type="entry name" value="DCA10"/>
</dbReference>
<dbReference type="InterPro" id="IPR015943">
    <property type="entry name" value="WD40/YVTN_repeat-like_dom_sf"/>
</dbReference>
<dbReference type="InterPro" id="IPR036322">
    <property type="entry name" value="WD40_repeat_dom_sf"/>
</dbReference>
<dbReference type="InterPro" id="IPR001680">
    <property type="entry name" value="WD40_rpt"/>
</dbReference>
<dbReference type="PANTHER" id="PTHR14588">
    <property type="entry name" value="DDB1- AND CUL4-ASSOCIATED FACTOR 10"/>
    <property type="match status" value="1"/>
</dbReference>
<dbReference type="PANTHER" id="PTHR14588:SF2">
    <property type="entry name" value="DDB1- AND CUL4-ASSOCIATED FACTOR 10"/>
    <property type="match status" value="1"/>
</dbReference>
<dbReference type="Pfam" id="PF00400">
    <property type="entry name" value="WD40"/>
    <property type="match status" value="3"/>
</dbReference>
<dbReference type="SMART" id="SM00320">
    <property type="entry name" value="WD40"/>
    <property type="match status" value="5"/>
</dbReference>
<dbReference type="SUPFAM" id="SSF50978">
    <property type="entry name" value="WD40 repeat-like"/>
    <property type="match status" value="1"/>
</dbReference>
<dbReference type="PROSITE" id="PS00678">
    <property type="entry name" value="WD_REPEATS_1"/>
    <property type="match status" value="1"/>
</dbReference>
<dbReference type="PROSITE" id="PS50082">
    <property type="entry name" value="WD_REPEATS_2"/>
    <property type="match status" value="2"/>
</dbReference>
<dbReference type="PROSITE" id="PS50294">
    <property type="entry name" value="WD_REPEATS_REGION"/>
    <property type="match status" value="1"/>
</dbReference>
<accession>A2AKB9</accession>
<accession>A2AKV8</accession>
<accession>Q3TNI7</accession>
<accession>Q5U4G6</accession>
<accession>Q8BHQ2</accession>
<accession>Q8BHS1</accession>
<accession>Q8BHX4</accession>
<accession>Q8K3A5</accession>
<proteinExistence type="evidence at protein level"/>